<sequence>MSKSLNIIWQYIRAFVLIYACLYAGIFLASLLPITIPGSIIGMLILFVLLALQILPAKWVNPGCYVLIRYMALLFVPIGVGVMQYFDLLRAQFGPVVVSCAISTLVVFVVVSWSSHLIHGERKVVGQKGTKK</sequence>
<feature type="chain" id="PRO_1000137367" description="UPF0299 membrane protein YohJ">
    <location>
        <begin position="1"/>
        <end position="132"/>
    </location>
</feature>
<feature type="transmembrane region" description="Helical" evidence="1">
    <location>
        <begin position="7"/>
        <end position="27"/>
    </location>
</feature>
<feature type="transmembrane region" description="Helical" evidence="1">
    <location>
        <begin position="31"/>
        <end position="51"/>
    </location>
</feature>
<feature type="transmembrane region" description="Helical" evidence="1">
    <location>
        <begin position="63"/>
        <end position="83"/>
    </location>
</feature>
<feature type="transmembrane region" description="Helical" evidence="1">
    <location>
        <begin position="93"/>
        <end position="113"/>
    </location>
</feature>
<organism>
    <name type="scientific">Salmonella agona (strain SL483)</name>
    <dbReference type="NCBI Taxonomy" id="454166"/>
    <lineage>
        <taxon>Bacteria</taxon>
        <taxon>Pseudomonadati</taxon>
        <taxon>Pseudomonadota</taxon>
        <taxon>Gammaproteobacteria</taxon>
        <taxon>Enterobacterales</taxon>
        <taxon>Enterobacteriaceae</taxon>
        <taxon>Salmonella</taxon>
    </lineage>
</organism>
<name>YOHJ_SALA4</name>
<accession>B5EYN1</accession>
<reference key="1">
    <citation type="journal article" date="2011" name="J. Bacteriol.">
        <title>Comparative genomics of 28 Salmonella enterica isolates: evidence for CRISPR-mediated adaptive sublineage evolution.</title>
        <authorList>
            <person name="Fricke W.F."/>
            <person name="Mammel M.K."/>
            <person name="McDermott P.F."/>
            <person name="Tartera C."/>
            <person name="White D.G."/>
            <person name="Leclerc J.E."/>
            <person name="Ravel J."/>
            <person name="Cebula T.A."/>
        </authorList>
    </citation>
    <scope>NUCLEOTIDE SEQUENCE [LARGE SCALE GENOMIC DNA]</scope>
    <source>
        <strain>SL483</strain>
    </source>
</reference>
<proteinExistence type="inferred from homology"/>
<comment type="subcellular location">
    <subcellularLocation>
        <location evidence="1">Cell inner membrane</location>
        <topology evidence="1">Multi-pass membrane protein</topology>
    </subcellularLocation>
</comment>
<comment type="similarity">
    <text evidence="1">Belongs to the UPF0299 family.</text>
</comment>
<gene>
    <name evidence="1" type="primary">yohJ</name>
    <name type="ordered locus">SeAg_B2327</name>
</gene>
<keyword id="KW-0997">Cell inner membrane</keyword>
<keyword id="KW-1003">Cell membrane</keyword>
<keyword id="KW-0472">Membrane</keyword>
<keyword id="KW-0812">Transmembrane</keyword>
<keyword id="KW-1133">Transmembrane helix</keyword>
<evidence type="ECO:0000255" key="1">
    <source>
        <dbReference type="HAMAP-Rule" id="MF_01144"/>
    </source>
</evidence>
<protein>
    <recommendedName>
        <fullName evidence="1">UPF0299 membrane protein YohJ</fullName>
    </recommendedName>
</protein>
<dbReference type="EMBL" id="CP001138">
    <property type="protein sequence ID" value="ACH50571.1"/>
    <property type="molecule type" value="Genomic_DNA"/>
</dbReference>
<dbReference type="RefSeq" id="WP_000045719.1">
    <property type="nucleotide sequence ID" value="NC_011149.1"/>
</dbReference>
<dbReference type="SMR" id="B5EYN1"/>
<dbReference type="KEGG" id="sea:SeAg_B2327"/>
<dbReference type="HOGENOM" id="CLU_113736_1_1_6"/>
<dbReference type="Proteomes" id="UP000008819">
    <property type="component" value="Chromosome"/>
</dbReference>
<dbReference type="GO" id="GO:0005886">
    <property type="term" value="C:plasma membrane"/>
    <property type="evidence" value="ECO:0007669"/>
    <property type="project" value="UniProtKB-SubCell"/>
</dbReference>
<dbReference type="HAMAP" id="MF_01144">
    <property type="entry name" value="UPF0299"/>
    <property type="match status" value="1"/>
</dbReference>
<dbReference type="InterPro" id="IPR005538">
    <property type="entry name" value="LrgA/CidA"/>
</dbReference>
<dbReference type="InterPro" id="IPR022957">
    <property type="entry name" value="Uncharacterised_UPF0299"/>
</dbReference>
<dbReference type="NCBIfam" id="NF002494">
    <property type="entry name" value="PRK01821.1"/>
    <property type="match status" value="1"/>
</dbReference>
<dbReference type="PANTHER" id="PTHR33931">
    <property type="entry name" value="HOLIN-LIKE PROTEIN CIDA-RELATED"/>
    <property type="match status" value="1"/>
</dbReference>
<dbReference type="PANTHER" id="PTHR33931:SF5">
    <property type="entry name" value="UPF0299 MEMBRANE PROTEIN YOHJ"/>
    <property type="match status" value="1"/>
</dbReference>
<dbReference type="Pfam" id="PF03788">
    <property type="entry name" value="LrgA"/>
    <property type="match status" value="1"/>
</dbReference>